<dbReference type="EMBL" id="CR626927">
    <property type="protein sequence ID" value="CAH06382.1"/>
    <property type="molecule type" value="Genomic_DNA"/>
</dbReference>
<dbReference type="RefSeq" id="WP_005784729.1">
    <property type="nucleotide sequence ID" value="NZ_UFTH01000001.1"/>
</dbReference>
<dbReference type="SMR" id="Q5LHJ8"/>
<dbReference type="PaxDb" id="272559-BF9343_0603"/>
<dbReference type="KEGG" id="bfs:BF9343_0603"/>
<dbReference type="eggNOG" id="COG0792">
    <property type="taxonomic scope" value="Bacteria"/>
</dbReference>
<dbReference type="HOGENOM" id="CLU_115353_2_1_10"/>
<dbReference type="Proteomes" id="UP000006731">
    <property type="component" value="Chromosome"/>
</dbReference>
<dbReference type="GO" id="GO:0003676">
    <property type="term" value="F:nucleic acid binding"/>
    <property type="evidence" value="ECO:0007669"/>
    <property type="project" value="InterPro"/>
</dbReference>
<dbReference type="CDD" id="cd20736">
    <property type="entry name" value="PoNe_Nuclease"/>
    <property type="match status" value="1"/>
</dbReference>
<dbReference type="Gene3D" id="3.40.1350.10">
    <property type="match status" value="1"/>
</dbReference>
<dbReference type="HAMAP" id="MF_00048">
    <property type="entry name" value="UPF0102"/>
    <property type="match status" value="1"/>
</dbReference>
<dbReference type="InterPro" id="IPR011335">
    <property type="entry name" value="Restrct_endonuc-II-like"/>
</dbReference>
<dbReference type="InterPro" id="IPR011856">
    <property type="entry name" value="tRNA_endonuc-like_dom_sf"/>
</dbReference>
<dbReference type="InterPro" id="IPR003509">
    <property type="entry name" value="UPF0102_YraN-like"/>
</dbReference>
<dbReference type="PANTHER" id="PTHR34039">
    <property type="entry name" value="UPF0102 PROTEIN YRAN"/>
    <property type="match status" value="1"/>
</dbReference>
<dbReference type="PANTHER" id="PTHR34039:SF1">
    <property type="entry name" value="UPF0102 PROTEIN YRAN"/>
    <property type="match status" value="1"/>
</dbReference>
<dbReference type="Pfam" id="PF02021">
    <property type="entry name" value="UPF0102"/>
    <property type="match status" value="1"/>
</dbReference>
<dbReference type="SUPFAM" id="SSF52980">
    <property type="entry name" value="Restriction endonuclease-like"/>
    <property type="match status" value="1"/>
</dbReference>
<reference key="1">
    <citation type="journal article" date="2005" name="Science">
        <title>Extensive DNA inversions in the B. fragilis genome control variable gene expression.</title>
        <authorList>
            <person name="Cerdeno-Tarraga A.-M."/>
            <person name="Patrick S."/>
            <person name="Crossman L.C."/>
            <person name="Blakely G."/>
            <person name="Abratt V."/>
            <person name="Lennard N."/>
            <person name="Poxton I."/>
            <person name="Duerden B."/>
            <person name="Harris B."/>
            <person name="Quail M.A."/>
            <person name="Barron A."/>
            <person name="Clark L."/>
            <person name="Corton C."/>
            <person name="Doggett J."/>
            <person name="Holden M.T.G."/>
            <person name="Larke N."/>
            <person name="Line A."/>
            <person name="Lord A."/>
            <person name="Norbertczak H."/>
            <person name="Ormond D."/>
            <person name="Price C."/>
            <person name="Rabbinowitsch E."/>
            <person name="Woodward J."/>
            <person name="Barrell B.G."/>
            <person name="Parkhill J."/>
        </authorList>
    </citation>
    <scope>NUCLEOTIDE SEQUENCE [LARGE SCALE GENOMIC DNA]</scope>
    <source>
        <strain>ATCC 25285 / DSM 2151 / CCUG 4856 / JCM 11019 / LMG 10263 / NCTC 9343 / Onslow / VPI 2553 / EN-2</strain>
    </source>
</reference>
<organism>
    <name type="scientific">Bacteroides fragilis (strain ATCC 25285 / DSM 2151 / CCUG 4856 / JCM 11019 / LMG 10263 / NCTC 9343 / Onslow / VPI 2553 / EN-2)</name>
    <dbReference type="NCBI Taxonomy" id="272559"/>
    <lineage>
        <taxon>Bacteria</taxon>
        <taxon>Pseudomonadati</taxon>
        <taxon>Bacteroidota</taxon>
        <taxon>Bacteroidia</taxon>
        <taxon>Bacteroidales</taxon>
        <taxon>Bacteroidaceae</taxon>
        <taxon>Bacteroides</taxon>
    </lineage>
</organism>
<feature type="chain" id="PRO_1000009189" description="UPF0102 protein BF0634">
    <location>
        <begin position="1"/>
        <end position="121"/>
    </location>
</feature>
<accession>Q5LHJ8</accession>
<evidence type="ECO:0000255" key="1">
    <source>
        <dbReference type="HAMAP-Rule" id="MF_00048"/>
    </source>
</evidence>
<gene>
    <name type="ordered locus">BF0634</name>
</gene>
<name>Y634_BACFN</name>
<comment type="similarity">
    <text evidence="1">Belongs to the UPF0102 family.</text>
</comment>
<protein>
    <recommendedName>
        <fullName evidence="1">UPF0102 protein BF0634</fullName>
    </recommendedName>
</protein>
<sequence>MAEHNLLGKAGEDAAVDYLERHDYVIRHRNWRKGHFELDIVAAKNGELIIVEVKTRSDTDFALPQDAVTPQKIRRTVIAADTYIKLFQIDEPVRFDIITVIGKTGNFRIEHIKEAFYPPLF</sequence>
<proteinExistence type="inferred from homology"/>